<comment type="function">
    <text evidence="1">Activates KDO (a required 8-carbon sugar) for incorporation into bacterial lipopolysaccharide in Gram-negative bacteria.</text>
</comment>
<comment type="catalytic activity">
    <reaction evidence="1">
        <text>3-deoxy-alpha-D-manno-oct-2-ulosonate + CTP = CMP-3-deoxy-beta-D-manno-octulosonate + diphosphate</text>
        <dbReference type="Rhea" id="RHEA:23448"/>
        <dbReference type="ChEBI" id="CHEBI:33019"/>
        <dbReference type="ChEBI" id="CHEBI:37563"/>
        <dbReference type="ChEBI" id="CHEBI:85986"/>
        <dbReference type="ChEBI" id="CHEBI:85987"/>
        <dbReference type="EC" id="2.7.7.38"/>
    </reaction>
</comment>
<comment type="pathway">
    <text evidence="1">Nucleotide-sugar biosynthesis; CMP-3-deoxy-D-manno-octulosonate biosynthesis; CMP-3-deoxy-D-manno-octulosonate from 3-deoxy-D-manno-octulosonate and CTP: step 1/1.</text>
</comment>
<comment type="pathway">
    <text evidence="1">Bacterial outer membrane biogenesis; lipopolysaccharide biosynthesis.</text>
</comment>
<comment type="subcellular location">
    <subcellularLocation>
        <location evidence="1">Cytoplasm</location>
    </subcellularLocation>
</comment>
<comment type="similarity">
    <text evidence="1">Belongs to the KdsB family.</text>
</comment>
<name>KDSB2_HYDCU</name>
<accession>Q31DP4</accession>
<organism>
    <name type="scientific">Hydrogenovibrio crunogenus (strain DSM 25203 / XCL-2)</name>
    <name type="common">Thiomicrospira crunogena</name>
    <dbReference type="NCBI Taxonomy" id="317025"/>
    <lineage>
        <taxon>Bacteria</taxon>
        <taxon>Pseudomonadati</taxon>
        <taxon>Pseudomonadota</taxon>
        <taxon>Gammaproteobacteria</taxon>
        <taxon>Thiotrichales</taxon>
        <taxon>Piscirickettsiaceae</taxon>
        <taxon>Hydrogenovibrio</taxon>
    </lineage>
</organism>
<evidence type="ECO:0000255" key="1">
    <source>
        <dbReference type="HAMAP-Rule" id="MF_00057"/>
    </source>
</evidence>
<sequence length="248" mass="27704">MKTYVFIPARYGSSRLPGKPLKLINGKPMIQHVFERISKATGIEAVYVATDDDRIKEVVEKFGGNVVMTPPEAESGTDRIAQAAQALDLKEDDLIVNVQGDQPLVNQGSIEAVIAPFKAADYDGSFEMSTLSFKIVNEAEITSPKDVKLVTDVNGFALYFSRATIPHGRDYWDHDSYKHLGVYAYTKRFVDLFNTLPMGHLEDIEKLEQLRALEYGHKIKVVESEWDSPEVDLPGDIEMMEALLNAGH</sequence>
<gene>
    <name evidence="1" type="primary">kdsB2</name>
    <name type="ordered locus">Tcr_2141</name>
</gene>
<protein>
    <recommendedName>
        <fullName evidence="1">3-deoxy-manno-octulosonate cytidylyltransferase 2</fullName>
        <ecNumber evidence="1">2.7.7.38</ecNumber>
    </recommendedName>
    <alternativeName>
        <fullName evidence="1">CMP-2-keto-3-deoxyoctulosonic acid synthase 2</fullName>
        <shortName evidence="1">CKS 2</shortName>
        <shortName evidence="1">CMP-KDO synthase 2</shortName>
    </alternativeName>
</protein>
<proteinExistence type="inferred from homology"/>
<keyword id="KW-0963">Cytoplasm</keyword>
<keyword id="KW-0448">Lipopolysaccharide biosynthesis</keyword>
<keyword id="KW-0548">Nucleotidyltransferase</keyword>
<keyword id="KW-0808">Transferase</keyword>
<feature type="chain" id="PRO_0000370167" description="3-deoxy-manno-octulosonate cytidylyltransferase 2">
    <location>
        <begin position="1"/>
        <end position="248"/>
    </location>
</feature>
<dbReference type="EC" id="2.7.7.38" evidence="1"/>
<dbReference type="EMBL" id="CP000109">
    <property type="protein sequence ID" value="ABB42729.1"/>
    <property type="molecule type" value="Genomic_DNA"/>
</dbReference>
<dbReference type="SMR" id="Q31DP4"/>
<dbReference type="STRING" id="317025.Tcr_2141"/>
<dbReference type="KEGG" id="tcx:Tcr_2141"/>
<dbReference type="eggNOG" id="COG1212">
    <property type="taxonomic scope" value="Bacteria"/>
</dbReference>
<dbReference type="HOGENOM" id="CLU_065038_0_1_6"/>
<dbReference type="OrthoDB" id="9815559at2"/>
<dbReference type="UniPathway" id="UPA00030"/>
<dbReference type="UniPathway" id="UPA00358">
    <property type="reaction ID" value="UER00476"/>
</dbReference>
<dbReference type="GO" id="GO:0005829">
    <property type="term" value="C:cytosol"/>
    <property type="evidence" value="ECO:0007669"/>
    <property type="project" value="TreeGrafter"/>
</dbReference>
<dbReference type="GO" id="GO:0008690">
    <property type="term" value="F:3-deoxy-manno-octulosonate cytidylyltransferase activity"/>
    <property type="evidence" value="ECO:0007669"/>
    <property type="project" value="UniProtKB-UniRule"/>
</dbReference>
<dbReference type="GO" id="GO:0033468">
    <property type="term" value="P:CMP-keto-3-deoxy-D-manno-octulosonic acid biosynthetic process"/>
    <property type="evidence" value="ECO:0007669"/>
    <property type="project" value="UniProtKB-UniRule"/>
</dbReference>
<dbReference type="GO" id="GO:0009103">
    <property type="term" value="P:lipopolysaccharide biosynthetic process"/>
    <property type="evidence" value="ECO:0007669"/>
    <property type="project" value="UniProtKB-UniRule"/>
</dbReference>
<dbReference type="CDD" id="cd02517">
    <property type="entry name" value="CMP-KDO-Synthetase"/>
    <property type="match status" value="1"/>
</dbReference>
<dbReference type="FunFam" id="3.90.550.10:FF:000011">
    <property type="entry name" value="3-deoxy-manno-octulosonate cytidylyltransferase"/>
    <property type="match status" value="1"/>
</dbReference>
<dbReference type="Gene3D" id="3.90.550.10">
    <property type="entry name" value="Spore Coat Polysaccharide Biosynthesis Protein SpsA, Chain A"/>
    <property type="match status" value="1"/>
</dbReference>
<dbReference type="HAMAP" id="MF_00057">
    <property type="entry name" value="KdsB"/>
    <property type="match status" value="1"/>
</dbReference>
<dbReference type="InterPro" id="IPR003329">
    <property type="entry name" value="Cytidylyl_trans"/>
</dbReference>
<dbReference type="InterPro" id="IPR004528">
    <property type="entry name" value="KdsB"/>
</dbReference>
<dbReference type="InterPro" id="IPR029044">
    <property type="entry name" value="Nucleotide-diphossugar_trans"/>
</dbReference>
<dbReference type="NCBIfam" id="TIGR00466">
    <property type="entry name" value="kdsB"/>
    <property type="match status" value="1"/>
</dbReference>
<dbReference type="NCBIfam" id="NF003950">
    <property type="entry name" value="PRK05450.1-3"/>
    <property type="match status" value="1"/>
</dbReference>
<dbReference type="NCBIfam" id="NF003952">
    <property type="entry name" value="PRK05450.1-5"/>
    <property type="match status" value="1"/>
</dbReference>
<dbReference type="NCBIfam" id="NF009905">
    <property type="entry name" value="PRK13368.1"/>
    <property type="match status" value="1"/>
</dbReference>
<dbReference type="PANTHER" id="PTHR42866">
    <property type="entry name" value="3-DEOXY-MANNO-OCTULOSONATE CYTIDYLYLTRANSFERASE"/>
    <property type="match status" value="1"/>
</dbReference>
<dbReference type="PANTHER" id="PTHR42866:SF2">
    <property type="entry name" value="3-DEOXY-MANNO-OCTULOSONATE CYTIDYLYLTRANSFERASE, MITOCHONDRIAL"/>
    <property type="match status" value="1"/>
</dbReference>
<dbReference type="Pfam" id="PF02348">
    <property type="entry name" value="CTP_transf_3"/>
    <property type="match status" value="1"/>
</dbReference>
<dbReference type="SUPFAM" id="SSF53448">
    <property type="entry name" value="Nucleotide-diphospho-sugar transferases"/>
    <property type="match status" value="1"/>
</dbReference>
<reference key="1">
    <citation type="journal article" date="2006" name="PLoS Biol.">
        <title>The genome of deep-sea vent chemolithoautotroph Thiomicrospira crunogena XCL-2.</title>
        <authorList>
            <person name="Scott K.M."/>
            <person name="Sievert S.M."/>
            <person name="Abril F.N."/>
            <person name="Ball L.A."/>
            <person name="Barrett C.J."/>
            <person name="Blake R.A."/>
            <person name="Boller A.J."/>
            <person name="Chain P.S.G."/>
            <person name="Clark J.A."/>
            <person name="Davis C.R."/>
            <person name="Detter C."/>
            <person name="Do K.F."/>
            <person name="Dobrinski K.P."/>
            <person name="Faza B.I."/>
            <person name="Fitzpatrick K.A."/>
            <person name="Freyermuth S.K."/>
            <person name="Harmer T.L."/>
            <person name="Hauser L.J."/>
            <person name="Huegler M."/>
            <person name="Kerfeld C.A."/>
            <person name="Klotz M.G."/>
            <person name="Kong W.W."/>
            <person name="Land M."/>
            <person name="Lapidus A."/>
            <person name="Larimer F.W."/>
            <person name="Longo D.L."/>
            <person name="Lucas S."/>
            <person name="Malfatti S.A."/>
            <person name="Massey S.E."/>
            <person name="Martin D.D."/>
            <person name="McCuddin Z."/>
            <person name="Meyer F."/>
            <person name="Moore J.L."/>
            <person name="Ocampo L.H. Jr."/>
            <person name="Paul J.H."/>
            <person name="Paulsen I.T."/>
            <person name="Reep D.K."/>
            <person name="Ren Q."/>
            <person name="Ross R.L."/>
            <person name="Sato P.Y."/>
            <person name="Thomas P."/>
            <person name="Tinkham L.E."/>
            <person name="Zeruth G.T."/>
        </authorList>
    </citation>
    <scope>NUCLEOTIDE SEQUENCE [LARGE SCALE GENOMIC DNA]</scope>
    <source>
        <strain>DSM 25203 / XCL-2</strain>
    </source>
</reference>